<evidence type="ECO:0000256" key="1">
    <source>
        <dbReference type="SAM" id="MobiDB-lite"/>
    </source>
</evidence>
<evidence type="ECO:0000269" key="2">
    <source>
    </source>
</evidence>
<evidence type="ECO:0000269" key="3">
    <source>
    </source>
</evidence>
<evidence type="ECO:0007744" key="4">
    <source>
    </source>
</evidence>
<evidence type="ECO:0007744" key="5">
    <source>
    </source>
</evidence>
<evidence type="ECO:0007744" key="6">
    <source>
    </source>
</evidence>
<evidence type="ECO:0007744" key="7">
    <source>
    </source>
</evidence>
<evidence type="ECO:0007744" key="8">
    <source>
    </source>
</evidence>
<evidence type="ECO:0007744" key="9">
    <source>
    </source>
</evidence>
<comment type="interaction">
    <interactant intactId="EBI-2548425">
        <id>Q96AT1</id>
    </interactant>
    <interactant intactId="EBI-742887">
        <id>Q8TAP6</id>
        <label>CEP76</label>
    </interactant>
    <organismsDiffer>false</organismsDiffer>
    <experiments>7</experiments>
</comment>
<organism>
    <name type="scientific">Homo sapiens</name>
    <name type="common">Human</name>
    <dbReference type="NCBI Taxonomy" id="9606"/>
    <lineage>
        <taxon>Eukaryota</taxon>
        <taxon>Metazoa</taxon>
        <taxon>Chordata</taxon>
        <taxon>Craniata</taxon>
        <taxon>Vertebrata</taxon>
        <taxon>Euteleostomi</taxon>
        <taxon>Mammalia</taxon>
        <taxon>Eutheria</taxon>
        <taxon>Euarchontoglires</taxon>
        <taxon>Primates</taxon>
        <taxon>Haplorrhini</taxon>
        <taxon>Catarrhini</taxon>
        <taxon>Hominidae</taxon>
        <taxon>Homo</taxon>
    </lineage>
</organism>
<dbReference type="EMBL" id="AK289549">
    <property type="protein sequence ID" value="BAF82238.1"/>
    <property type="molecule type" value="mRNA"/>
</dbReference>
<dbReference type="EMBL" id="BC008468">
    <property type="protein sequence ID" value="AAH08468.1"/>
    <property type="molecule type" value="mRNA"/>
</dbReference>
<dbReference type="EMBL" id="BC016790">
    <property type="protein sequence ID" value="AAH16790.1"/>
    <property type="molecule type" value="mRNA"/>
</dbReference>
<dbReference type="EMBL" id="AB032969">
    <property type="protein sequence ID" value="BAA86457.1"/>
    <property type="molecule type" value="mRNA"/>
</dbReference>
<dbReference type="CCDS" id="CCDS2721.1"/>
<dbReference type="RefSeq" id="NP_065747.1">
    <property type="nucleotide sequence ID" value="NM_020696.4"/>
</dbReference>
<dbReference type="BioGRID" id="121527">
    <property type="interactions" value="64"/>
</dbReference>
<dbReference type="FunCoup" id="Q96AT1">
    <property type="interactions" value="2826"/>
</dbReference>
<dbReference type="IntAct" id="Q96AT1">
    <property type="interactions" value="39"/>
</dbReference>
<dbReference type="MINT" id="Q96AT1"/>
<dbReference type="STRING" id="9606.ENSP00000296121"/>
<dbReference type="GlyGen" id="Q96AT1">
    <property type="glycosylation" value="2 sites"/>
</dbReference>
<dbReference type="iPTMnet" id="Q96AT1"/>
<dbReference type="MetOSite" id="Q96AT1"/>
<dbReference type="PhosphoSitePlus" id="Q96AT1"/>
<dbReference type="BioMuta" id="KIAA1143"/>
<dbReference type="DMDM" id="114149931"/>
<dbReference type="jPOST" id="Q96AT1"/>
<dbReference type="MassIVE" id="Q96AT1"/>
<dbReference type="PaxDb" id="9606-ENSP00000296121"/>
<dbReference type="PeptideAtlas" id="Q96AT1"/>
<dbReference type="ProteomicsDB" id="75996"/>
<dbReference type="Pumba" id="Q96AT1"/>
<dbReference type="TopDownProteomics" id="Q96AT1"/>
<dbReference type="Antibodypedia" id="48785">
    <property type="antibodies" value="56 antibodies from 14 providers"/>
</dbReference>
<dbReference type="DNASU" id="57456"/>
<dbReference type="Ensembl" id="ENST00000296121.6">
    <property type="protein sequence ID" value="ENSP00000296121.4"/>
    <property type="gene ID" value="ENSG00000163807.6"/>
</dbReference>
<dbReference type="Ensembl" id="ENST00000627745.2">
    <property type="protein sequence ID" value="ENSP00000486878.1"/>
    <property type="gene ID" value="ENSG00000281665.2"/>
</dbReference>
<dbReference type="GeneID" id="57456"/>
<dbReference type="KEGG" id="hsa:57456"/>
<dbReference type="MANE-Select" id="ENST00000296121.6">
    <property type="protein sequence ID" value="ENSP00000296121.4"/>
    <property type="RefSeq nucleotide sequence ID" value="NM_020696.4"/>
    <property type="RefSeq protein sequence ID" value="NP_065747.1"/>
</dbReference>
<dbReference type="UCSC" id="uc011bac.3">
    <property type="organism name" value="human"/>
</dbReference>
<dbReference type="AGR" id="HGNC:29198"/>
<dbReference type="CTD" id="57456"/>
<dbReference type="GeneCards" id="KIAA1143"/>
<dbReference type="HGNC" id="HGNC:29198">
    <property type="gene designation" value="KIAA1143"/>
</dbReference>
<dbReference type="HPA" id="ENSG00000163807">
    <property type="expression patterns" value="Low tissue specificity"/>
</dbReference>
<dbReference type="neXtProt" id="NX_Q96AT1"/>
<dbReference type="OpenTargets" id="ENSG00000163807"/>
<dbReference type="PharmGKB" id="PA142671622"/>
<dbReference type="VEuPathDB" id="HostDB:ENSG00000163807"/>
<dbReference type="eggNOG" id="ENOG502S2KJ">
    <property type="taxonomic scope" value="Eukaryota"/>
</dbReference>
<dbReference type="GeneTree" id="ENSGT00390000001296"/>
<dbReference type="HOGENOM" id="CLU_111288_0_1_1"/>
<dbReference type="InParanoid" id="Q96AT1"/>
<dbReference type="OMA" id="KRQVGYR"/>
<dbReference type="OrthoDB" id="10043580at2759"/>
<dbReference type="PAN-GO" id="Q96AT1">
    <property type="GO annotations" value="0 GO annotations based on evolutionary models"/>
</dbReference>
<dbReference type="PhylomeDB" id="Q96AT1"/>
<dbReference type="TreeFam" id="TF313955"/>
<dbReference type="PathwayCommons" id="Q96AT1"/>
<dbReference type="SignaLink" id="Q96AT1"/>
<dbReference type="BioGRID-ORCS" id="57456">
    <property type="hits" value="88 hits in 1157 CRISPR screens"/>
</dbReference>
<dbReference type="ChiTaRS" id="KIAA1143">
    <property type="organism name" value="human"/>
</dbReference>
<dbReference type="GenomeRNAi" id="57456"/>
<dbReference type="Pharos" id="Q96AT1">
    <property type="development level" value="Tdark"/>
</dbReference>
<dbReference type="PRO" id="PR:Q96AT1"/>
<dbReference type="Proteomes" id="UP000005640">
    <property type="component" value="Chromosome 3"/>
</dbReference>
<dbReference type="RNAct" id="Q96AT1">
    <property type="molecule type" value="protein"/>
</dbReference>
<dbReference type="Bgee" id="ENSG00000163807">
    <property type="expression patterns" value="Expressed in calcaneal tendon and 111 other cell types or tissues"/>
</dbReference>
<dbReference type="InterPro" id="IPR027911">
    <property type="entry name" value="DUF4604"/>
</dbReference>
<dbReference type="InterPro" id="IPR040219">
    <property type="entry name" value="KIAA1143-like"/>
</dbReference>
<dbReference type="PANTHER" id="PTHR31195">
    <property type="entry name" value="GEO02494P1"/>
    <property type="match status" value="1"/>
</dbReference>
<dbReference type="PANTHER" id="PTHR31195:SF2">
    <property type="entry name" value="GEO02494P1"/>
    <property type="match status" value="1"/>
</dbReference>
<dbReference type="Pfam" id="PF15377">
    <property type="entry name" value="DUF4604"/>
    <property type="match status" value="1"/>
</dbReference>
<accession>Q96AT1</accession>
<accession>A8K0I4</accession>
<accession>Q96HJ8</accession>
<accession>Q9ULS7</accession>
<reference key="1">
    <citation type="journal article" date="2004" name="Nat. Genet.">
        <title>Complete sequencing and characterization of 21,243 full-length human cDNAs.</title>
        <authorList>
            <person name="Ota T."/>
            <person name="Suzuki Y."/>
            <person name="Nishikawa T."/>
            <person name="Otsuki T."/>
            <person name="Sugiyama T."/>
            <person name="Irie R."/>
            <person name="Wakamatsu A."/>
            <person name="Hayashi K."/>
            <person name="Sato H."/>
            <person name="Nagai K."/>
            <person name="Kimura K."/>
            <person name="Makita H."/>
            <person name="Sekine M."/>
            <person name="Obayashi M."/>
            <person name="Nishi T."/>
            <person name="Shibahara T."/>
            <person name="Tanaka T."/>
            <person name="Ishii S."/>
            <person name="Yamamoto J."/>
            <person name="Saito K."/>
            <person name="Kawai Y."/>
            <person name="Isono Y."/>
            <person name="Nakamura Y."/>
            <person name="Nagahari K."/>
            <person name="Murakami K."/>
            <person name="Yasuda T."/>
            <person name="Iwayanagi T."/>
            <person name="Wagatsuma M."/>
            <person name="Shiratori A."/>
            <person name="Sudo H."/>
            <person name="Hosoiri T."/>
            <person name="Kaku Y."/>
            <person name="Kodaira H."/>
            <person name="Kondo H."/>
            <person name="Sugawara M."/>
            <person name="Takahashi M."/>
            <person name="Kanda K."/>
            <person name="Yokoi T."/>
            <person name="Furuya T."/>
            <person name="Kikkawa E."/>
            <person name="Omura Y."/>
            <person name="Abe K."/>
            <person name="Kamihara K."/>
            <person name="Katsuta N."/>
            <person name="Sato K."/>
            <person name="Tanikawa M."/>
            <person name="Yamazaki M."/>
            <person name="Ninomiya K."/>
            <person name="Ishibashi T."/>
            <person name="Yamashita H."/>
            <person name="Murakawa K."/>
            <person name="Fujimori K."/>
            <person name="Tanai H."/>
            <person name="Kimata M."/>
            <person name="Watanabe M."/>
            <person name="Hiraoka S."/>
            <person name="Chiba Y."/>
            <person name="Ishida S."/>
            <person name="Ono Y."/>
            <person name="Takiguchi S."/>
            <person name="Watanabe S."/>
            <person name="Yosida M."/>
            <person name="Hotuta T."/>
            <person name="Kusano J."/>
            <person name="Kanehori K."/>
            <person name="Takahashi-Fujii A."/>
            <person name="Hara H."/>
            <person name="Tanase T.-O."/>
            <person name="Nomura Y."/>
            <person name="Togiya S."/>
            <person name="Komai F."/>
            <person name="Hara R."/>
            <person name="Takeuchi K."/>
            <person name="Arita M."/>
            <person name="Imose N."/>
            <person name="Musashino K."/>
            <person name="Yuuki H."/>
            <person name="Oshima A."/>
            <person name="Sasaki N."/>
            <person name="Aotsuka S."/>
            <person name="Yoshikawa Y."/>
            <person name="Matsunawa H."/>
            <person name="Ichihara T."/>
            <person name="Shiohata N."/>
            <person name="Sano S."/>
            <person name="Moriya S."/>
            <person name="Momiyama H."/>
            <person name="Satoh N."/>
            <person name="Takami S."/>
            <person name="Terashima Y."/>
            <person name="Suzuki O."/>
            <person name="Nakagawa S."/>
            <person name="Senoh A."/>
            <person name="Mizoguchi H."/>
            <person name="Goto Y."/>
            <person name="Shimizu F."/>
            <person name="Wakebe H."/>
            <person name="Hishigaki H."/>
            <person name="Watanabe T."/>
            <person name="Sugiyama A."/>
            <person name="Takemoto M."/>
            <person name="Kawakami B."/>
            <person name="Yamazaki M."/>
            <person name="Watanabe K."/>
            <person name="Kumagai A."/>
            <person name="Itakura S."/>
            <person name="Fukuzumi Y."/>
            <person name="Fujimori Y."/>
            <person name="Komiyama M."/>
            <person name="Tashiro H."/>
            <person name="Tanigami A."/>
            <person name="Fujiwara T."/>
            <person name="Ono T."/>
            <person name="Yamada K."/>
            <person name="Fujii Y."/>
            <person name="Ozaki K."/>
            <person name="Hirao M."/>
            <person name="Ohmori Y."/>
            <person name="Kawabata A."/>
            <person name="Hikiji T."/>
            <person name="Kobatake N."/>
            <person name="Inagaki H."/>
            <person name="Ikema Y."/>
            <person name="Okamoto S."/>
            <person name="Okitani R."/>
            <person name="Kawakami T."/>
            <person name="Noguchi S."/>
            <person name="Itoh T."/>
            <person name="Shigeta K."/>
            <person name="Senba T."/>
            <person name="Matsumura K."/>
            <person name="Nakajima Y."/>
            <person name="Mizuno T."/>
            <person name="Morinaga M."/>
            <person name="Sasaki M."/>
            <person name="Togashi T."/>
            <person name="Oyama M."/>
            <person name="Hata H."/>
            <person name="Watanabe M."/>
            <person name="Komatsu T."/>
            <person name="Mizushima-Sugano J."/>
            <person name="Satoh T."/>
            <person name="Shirai Y."/>
            <person name="Takahashi Y."/>
            <person name="Nakagawa K."/>
            <person name="Okumura K."/>
            <person name="Nagase T."/>
            <person name="Nomura N."/>
            <person name="Kikuchi H."/>
            <person name="Masuho Y."/>
            <person name="Yamashita R."/>
            <person name="Nakai K."/>
            <person name="Yada T."/>
            <person name="Nakamura Y."/>
            <person name="Ohara O."/>
            <person name="Isogai T."/>
            <person name="Sugano S."/>
        </authorList>
    </citation>
    <scope>NUCLEOTIDE SEQUENCE [LARGE SCALE MRNA]</scope>
    <scope>VARIANT MET-139</scope>
    <source>
        <tissue>Cerebellum</tissue>
    </source>
</reference>
<reference key="2">
    <citation type="journal article" date="2004" name="Genome Res.">
        <title>The status, quality, and expansion of the NIH full-length cDNA project: the Mammalian Gene Collection (MGC).</title>
        <authorList>
            <consortium name="The MGC Project Team"/>
        </authorList>
    </citation>
    <scope>NUCLEOTIDE SEQUENCE [LARGE SCALE MRNA]</scope>
    <scope>VARIANT MET-139</scope>
    <source>
        <tissue>Bone marrow</tissue>
    </source>
</reference>
<reference key="3">
    <citation type="journal article" date="1999" name="DNA Res.">
        <title>Characterization of cDNA clones selected by the GeneMark analysis from size-fractionated cDNA libraries from human brain.</title>
        <authorList>
            <person name="Hirosawa M."/>
            <person name="Nagase T."/>
            <person name="Ishikawa K."/>
            <person name="Kikuno R."/>
            <person name="Nomura N."/>
            <person name="Ohara O."/>
        </authorList>
    </citation>
    <scope>NUCLEOTIDE SEQUENCE [LARGE SCALE MRNA] OF 39-154</scope>
    <source>
        <tissue>Brain</tissue>
    </source>
</reference>
<reference key="4">
    <citation type="journal article" date="2008" name="Proc. Natl. Acad. Sci. U.S.A.">
        <title>A quantitative atlas of mitotic phosphorylation.</title>
        <authorList>
            <person name="Dephoure N."/>
            <person name="Zhou C."/>
            <person name="Villen J."/>
            <person name="Beausoleil S.A."/>
            <person name="Bakalarski C.E."/>
            <person name="Elledge S.J."/>
            <person name="Gygi S.P."/>
        </authorList>
    </citation>
    <scope>PHOSPHORYLATION [LARGE SCALE ANALYSIS] AT SER-146</scope>
    <scope>IDENTIFICATION BY MASS SPECTROMETRY [LARGE SCALE ANALYSIS]</scope>
    <source>
        <tissue>Cervix carcinoma</tissue>
    </source>
</reference>
<reference key="5">
    <citation type="journal article" date="2009" name="Anal. Chem.">
        <title>Lys-N and trypsin cover complementary parts of the phosphoproteome in a refined SCX-based approach.</title>
        <authorList>
            <person name="Gauci S."/>
            <person name="Helbig A.O."/>
            <person name="Slijper M."/>
            <person name="Krijgsveld J."/>
            <person name="Heck A.J."/>
            <person name="Mohammed S."/>
        </authorList>
    </citation>
    <scope>IDENTIFICATION BY MASS SPECTROMETRY [LARGE SCALE ANALYSIS]</scope>
</reference>
<reference key="6">
    <citation type="journal article" date="2009" name="Sci. Signal.">
        <title>Quantitative phosphoproteomic analysis of T cell receptor signaling reveals system-wide modulation of protein-protein interactions.</title>
        <authorList>
            <person name="Mayya V."/>
            <person name="Lundgren D.H."/>
            <person name="Hwang S.-I."/>
            <person name="Rezaul K."/>
            <person name="Wu L."/>
            <person name="Eng J.K."/>
            <person name="Rodionov V."/>
            <person name="Han D.K."/>
        </authorList>
    </citation>
    <scope>PHOSPHORYLATION [LARGE SCALE ANALYSIS] AT SER-146</scope>
    <scope>IDENTIFICATION BY MASS SPECTROMETRY [LARGE SCALE ANALYSIS]</scope>
    <source>
        <tissue>Leukemic T-cell</tissue>
    </source>
</reference>
<reference key="7">
    <citation type="journal article" date="2009" name="Science">
        <title>Lysine acetylation targets protein complexes and co-regulates major cellular functions.</title>
        <authorList>
            <person name="Choudhary C."/>
            <person name="Kumar C."/>
            <person name="Gnad F."/>
            <person name="Nielsen M.L."/>
            <person name="Rehman M."/>
            <person name="Walther T.C."/>
            <person name="Olsen J.V."/>
            <person name="Mann M."/>
        </authorList>
    </citation>
    <scope>ACETYLATION [LARGE SCALE ANALYSIS] AT LYS-108</scope>
    <scope>IDENTIFICATION BY MASS SPECTROMETRY [LARGE SCALE ANALYSIS]</scope>
</reference>
<reference key="8">
    <citation type="journal article" date="2010" name="Sci. Signal.">
        <title>Quantitative phosphoproteomics reveals widespread full phosphorylation site occupancy during mitosis.</title>
        <authorList>
            <person name="Olsen J.V."/>
            <person name="Vermeulen M."/>
            <person name="Santamaria A."/>
            <person name="Kumar C."/>
            <person name="Miller M.L."/>
            <person name="Jensen L.J."/>
            <person name="Gnad F."/>
            <person name="Cox J."/>
            <person name="Jensen T.S."/>
            <person name="Nigg E.A."/>
            <person name="Brunak S."/>
            <person name="Mann M."/>
        </authorList>
    </citation>
    <scope>PHOSPHORYLATION [LARGE SCALE ANALYSIS] AT SER-50 AND SER-146</scope>
    <scope>IDENTIFICATION BY MASS SPECTROMETRY [LARGE SCALE ANALYSIS]</scope>
    <source>
        <tissue>Cervix carcinoma</tissue>
    </source>
</reference>
<reference key="9">
    <citation type="journal article" date="2011" name="BMC Syst. Biol.">
        <title>Initial characterization of the human central proteome.</title>
        <authorList>
            <person name="Burkard T.R."/>
            <person name="Planyavsky M."/>
            <person name="Kaupe I."/>
            <person name="Breitwieser F.P."/>
            <person name="Buerckstuemmer T."/>
            <person name="Bennett K.L."/>
            <person name="Superti-Furga G."/>
            <person name="Colinge J."/>
        </authorList>
    </citation>
    <scope>IDENTIFICATION BY MASS SPECTROMETRY [LARGE SCALE ANALYSIS]</scope>
</reference>
<reference key="10">
    <citation type="journal article" date="2011" name="Sci. Signal.">
        <title>System-wide temporal characterization of the proteome and phosphoproteome of human embryonic stem cell differentiation.</title>
        <authorList>
            <person name="Rigbolt K.T."/>
            <person name="Prokhorova T.A."/>
            <person name="Akimov V."/>
            <person name="Henningsen J."/>
            <person name="Johansen P.T."/>
            <person name="Kratchmarova I."/>
            <person name="Kassem M."/>
            <person name="Mann M."/>
            <person name="Olsen J.V."/>
            <person name="Blagoev B."/>
        </authorList>
    </citation>
    <scope>PHOSPHORYLATION [LARGE SCALE ANALYSIS] AT SER-50 AND SER-146</scope>
    <scope>IDENTIFICATION BY MASS SPECTROMETRY [LARGE SCALE ANALYSIS]</scope>
</reference>
<reference key="11">
    <citation type="journal article" date="2013" name="J. Proteome Res.">
        <title>Toward a comprehensive characterization of a human cancer cell phosphoproteome.</title>
        <authorList>
            <person name="Zhou H."/>
            <person name="Di Palma S."/>
            <person name="Preisinger C."/>
            <person name="Peng M."/>
            <person name="Polat A.N."/>
            <person name="Heck A.J."/>
            <person name="Mohammed S."/>
        </authorList>
    </citation>
    <scope>PHOSPHORYLATION [LARGE SCALE ANALYSIS] AT SER-50</scope>
    <scope>IDENTIFICATION BY MASS SPECTROMETRY [LARGE SCALE ANALYSIS]</scope>
    <source>
        <tissue>Cervix carcinoma</tissue>
        <tissue>Erythroleukemia</tissue>
    </source>
</reference>
<proteinExistence type="evidence at protein level"/>
<keyword id="KW-0007">Acetylation</keyword>
<keyword id="KW-0597">Phosphoprotein</keyword>
<keyword id="KW-1267">Proteomics identification</keyword>
<keyword id="KW-1185">Reference proteome</keyword>
<sequence>MSKRNQVSYVRPAEPAFLARFKERVGYREGPTVETKRIQPQPPDEDGDHSDKEDEQPQVVVLKKGDLSVEEVMKIKAEIKAAKADEEPTPADGRIIYRKPVKHPSDEKYSGLTASSKKKKPNEDEVNQDSVKKNSQKQIKNSSLLSFDNEDENE</sequence>
<name>K1143_HUMAN</name>
<feature type="chain" id="PRO_0000248338" description="Uncharacterized protein KIAA1143">
    <location>
        <begin position="1"/>
        <end position="154"/>
    </location>
</feature>
<feature type="region of interest" description="Disordered" evidence="1">
    <location>
        <begin position="23"/>
        <end position="63"/>
    </location>
</feature>
<feature type="region of interest" description="Disordered" evidence="1">
    <location>
        <begin position="79"/>
        <end position="154"/>
    </location>
</feature>
<feature type="compositionally biased region" description="Acidic residues" evidence="1">
    <location>
        <begin position="43"/>
        <end position="56"/>
    </location>
</feature>
<feature type="modified residue" description="Phosphoserine" evidence="7 8 9">
    <location>
        <position position="50"/>
    </location>
</feature>
<feature type="modified residue" description="N6-acetyllysine" evidence="5">
    <location>
        <position position="108"/>
    </location>
</feature>
<feature type="modified residue" description="Phosphoserine" evidence="4 6 7 8">
    <location>
        <position position="146"/>
    </location>
</feature>
<feature type="sequence variant" id="VAR_027272" description="In dbSNP:rs3853404." evidence="2 3">
    <original>I</original>
    <variation>M</variation>
    <location>
        <position position="139"/>
    </location>
</feature>
<gene>
    <name type="primary">KIAA1143</name>
</gene>
<protein>
    <recommendedName>
        <fullName>Uncharacterized protein KIAA1143</fullName>
    </recommendedName>
</protein>